<feature type="chain" id="PRO_0000118295" description="NADH-ubiquinone oxidoreductase chain 6">
    <location>
        <begin position="1"/>
        <end position="171"/>
    </location>
</feature>
<feature type="transmembrane region" description="Helical" evidence="3">
    <location>
        <begin position="1"/>
        <end position="21"/>
    </location>
</feature>
<feature type="transmembrane region" description="Helical" evidence="3">
    <location>
        <begin position="25"/>
        <end position="44"/>
    </location>
</feature>
<feature type="transmembrane region" description="Helical" evidence="3">
    <location>
        <begin position="49"/>
        <end position="71"/>
    </location>
</feature>
<feature type="transmembrane region" description="Helical" evidence="3">
    <location>
        <begin position="85"/>
        <end position="105"/>
    </location>
</feature>
<feature type="transmembrane region" description="Helical" evidence="3">
    <location>
        <begin position="150"/>
        <end position="170"/>
    </location>
</feature>
<geneLocation type="mitochondrion"/>
<gene>
    <name type="primary">MT-ND6</name>
    <name type="synonym">MTND6</name>
    <name type="synonym">NADH6</name>
    <name type="synonym">ND6</name>
</gene>
<reference key="1">
    <citation type="journal article" date="2002" name="Proc. Natl. Acad. Sci. U.S.A.">
        <title>Mammalian mitogenomic relationships and the root of the eutherian tree.</title>
        <authorList>
            <person name="Arnason U."/>
            <person name="Adegoke J.A."/>
            <person name="Bodin K."/>
            <person name="Born E.W."/>
            <person name="Esa Y.B."/>
            <person name="Gullberg A."/>
            <person name="Nilsson M."/>
            <person name="Short R.V."/>
            <person name="Xu X."/>
            <person name="Janke A."/>
        </authorList>
    </citation>
    <scope>NUCLEOTIDE SEQUENCE [GENOMIC DNA]</scope>
</reference>
<name>NU6M_LEMCA</name>
<protein>
    <recommendedName>
        <fullName>NADH-ubiquinone oxidoreductase chain 6</fullName>
        <ecNumber evidence="1">7.1.1.2</ecNumber>
    </recommendedName>
    <alternativeName>
        <fullName>NADH dehydrogenase subunit 6</fullName>
    </alternativeName>
</protein>
<comment type="function">
    <text evidence="1">Core subunit of the mitochondrial membrane respiratory chain NADH dehydrogenase (Complex I) which catalyzes electron transfer from NADH through the respiratory chain, using ubiquinone as an electron acceptor. Essential for the catalytic activity and assembly of complex I.</text>
</comment>
<comment type="catalytic activity">
    <reaction evidence="1">
        <text>a ubiquinone + NADH + 5 H(+)(in) = a ubiquinol + NAD(+) + 4 H(+)(out)</text>
        <dbReference type="Rhea" id="RHEA:29091"/>
        <dbReference type="Rhea" id="RHEA-COMP:9565"/>
        <dbReference type="Rhea" id="RHEA-COMP:9566"/>
        <dbReference type="ChEBI" id="CHEBI:15378"/>
        <dbReference type="ChEBI" id="CHEBI:16389"/>
        <dbReference type="ChEBI" id="CHEBI:17976"/>
        <dbReference type="ChEBI" id="CHEBI:57540"/>
        <dbReference type="ChEBI" id="CHEBI:57945"/>
        <dbReference type="EC" id="7.1.1.2"/>
    </reaction>
</comment>
<comment type="subunit">
    <text evidence="2">Core subunit of respiratory chain NADH dehydrogenase (Complex I) which is composed of 45 different subunits.</text>
</comment>
<comment type="subcellular location">
    <subcellularLocation>
        <location evidence="2">Mitochondrion inner membrane</location>
        <topology evidence="3">Multi-pass membrane protein</topology>
    </subcellularLocation>
</comment>
<comment type="similarity">
    <text evidence="4">Belongs to the complex I subunit 6 family.</text>
</comment>
<keyword id="KW-0249">Electron transport</keyword>
<keyword id="KW-0472">Membrane</keyword>
<keyword id="KW-0496">Mitochondrion</keyword>
<keyword id="KW-0999">Mitochondrion inner membrane</keyword>
<keyword id="KW-0520">NAD</keyword>
<keyword id="KW-0679">Respiratory chain</keyword>
<keyword id="KW-1278">Translocase</keyword>
<keyword id="KW-0812">Transmembrane</keyword>
<keyword id="KW-1133">Transmembrane helix</keyword>
<keyword id="KW-0813">Transport</keyword>
<keyword id="KW-0830">Ubiquinone</keyword>
<dbReference type="EC" id="7.1.1.2" evidence="1"/>
<dbReference type="EMBL" id="AJ421451">
    <property type="protein sequence ID" value="CAD13432.1"/>
    <property type="molecule type" value="Genomic_DNA"/>
</dbReference>
<dbReference type="RefSeq" id="NP_659299.1">
    <property type="nucleotide sequence ID" value="NC_004025.1"/>
</dbReference>
<dbReference type="SMR" id="Q8LX23"/>
<dbReference type="GO" id="GO:0005743">
    <property type="term" value="C:mitochondrial inner membrane"/>
    <property type="evidence" value="ECO:0000250"/>
    <property type="project" value="UniProtKB"/>
</dbReference>
<dbReference type="GO" id="GO:0008137">
    <property type="term" value="F:NADH dehydrogenase (ubiquinone) activity"/>
    <property type="evidence" value="ECO:0000250"/>
    <property type="project" value="UniProtKB"/>
</dbReference>
<dbReference type="GO" id="GO:0006120">
    <property type="term" value="P:mitochondrial electron transport, NADH to ubiquinone"/>
    <property type="evidence" value="ECO:0000250"/>
    <property type="project" value="UniProtKB"/>
</dbReference>
<dbReference type="GO" id="GO:0032981">
    <property type="term" value="P:mitochondrial respiratory chain complex I assembly"/>
    <property type="evidence" value="ECO:0000250"/>
    <property type="project" value="UniProtKB"/>
</dbReference>
<dbReference type="Gene3D" id="1.20.120.1200">
    <property type="entry name" value="NADH-ubiquinone/plastoquinone oxidoreductase chain 6, subunit NuoJ"/>
    <property type="match status" value="1"/>
</dbReference>
<dbReference type="InterPro" id="IPR050269">
    <property type="entry name" value="ComplexI_Subunit6"/>
</dbReference>
<dbReference type="InterPro" id="IPR001457">
    <property type="entry name" value="NADH_UbQ/plastoQ_OxRdtase_su6"/>
</dbReference>
<dbReference type="InterPro" id="IPR042106">
    <property type="entry name" value="Nuo/plastoQ_OxRdtase_6_NuoJ"/>
</dbReference>
<dbReference type="PANTHER" id="PTHR11435">
    <property type="entry name" value="NADH UBIQUINONE OXIDOREDUCTASE SUBUNIT ND6"/>
    <property type="match status" value="1"/>
</dbReference>
<dbReference type="PANTHER" id="PTHR11435:SF1">
    <property type="entry name" value="NADH-UBIQUINONE OXIDOREDUCTASE CHAIN 6"/>
    <property type="match status" value="1"/>
</dbReference>
<dbReference type="Pfam" id="PF00499">
    <property type="entry name" value="Oxidored_q3"/>
    <property type="match status" value="1"/>
</dbReference>
<sequence>MYVMFLLSILLVLGFVSISSKPSPIYGGVGLIVSGAVGCGIIMGFGGSFMGLMVFLIYLGGMLVVFGYTTAMATEEYPETWGSNVVIWGVVLLGVGMELFMVAWMVEYGGFGVGDVFGGVENWMIFESKEGGVIREDSLGVASLYNKASWFAAIAGWSLFISVLIVIEIIR</sequence>
<proteinExistence type="inferred from homology"/>
<evidence type="ECO:0000250" key="1">
    <source>
        <dbReference type="UniProtKB" id="P03923"/>
    </source>
</evidence>
<evidence type="ECO:0000250" key="2">
    <source>
        <dbReference type="UniProtKB" id="P03924"/>
    </source>
</evidence>
<evidence type="ECO:0000255" key="3"/>
<evidence type="ECO:0000305" key="4"/>
<organism>
    <name type="scientific">Lemur catta</name>
    <name type="common">Ring-tailed lemur</name>
    <dbReference type="NCBI Taxonomy" id="9447"/>
    <lineage>
        <taxon>Eukaryota</taxon>
        <taxon>Metazoa</taxon>
        <taxon>Chordata</taxon>
        <taxon>Craniata</taxon>
        <taxon>Vertebrata</taxon>
        <taxon>Euteleostomi</taxon>
        <taxon>Mammalia</taxon>
        <taxon>Eutheria</taxon>
        <taxon>Euarchontoglires</taxon>
        <taxon>Primates</taxon>
        <taxon>Strepsirrhini</taxon>
        <taxon>Lemuriformes</taxon>
        <taxon>Lemuridae</taxon>
        <taxon>Lemur</taxon>
    </lineage>
</organism>
<accession>Q8LX23</accession>